<dbReference type="EMBL" id="AF178983">
    <property type="protein sequence ID" value="AAF44347.1"/>
    <property type="molecule type" value="mRNA"/>
</dbReference>
<dbReference type="EMBL" id="AY094594">
    <property type="protein sequence ID" value="AAM22521.1"/>
    <property type="molecule type" value="mRNA"/>
</dbReference>
<dbReference type="EMBL" id="AL137731">
    <property type="protein sequence ID" value="CAI46214.1"/>
    <property type="molecule type" value="mRNA"/>
</dbReference>
<dbReference type="EMBL" id="CH471053">
    <property type="protein sequence ID" value="EAX00736.1"/>
    <property type="molecule type" value="Genomic_DNA"/>
</dbReference>
<dbReference type="EMBL" id="CH471053">
    <property type="protein sequence ID" value="EAX00735.1"/>
    <property type="molecule type" value="Genomic_DNA"/>
</dbReference>
<dbReference type="EMBL" id="CH471053">
    <property type="protein sequence ID" value="EAX00737.1"/>
    <property type="molecule type" value="Genomic_DNA"/>
</dbReference>
<dbReference type="EMBL" id="BC034049">
    <property type="protein sequence ID" value="AAH34049.1"/>
    <property type="molecule type" value="mRNA"/>
</dbReference>
<dbReference type="EMBL" id="BK001284">
    <property type="protein sequence ID" value="DAA01323.1"/>
    <property type="molecule type" value="mRNA"/>
</dbReference>
<dbReference type="CCDS" id="CCDS1716.1">
    <molecule id="Q9NZQ0-1"/>
</dbReference>
<dbReference type="CCDS" id="CCDS74493.1">
    <molecule id="Q9NZQ0-3"/>
</dbReference>
<dbReference type="RefSeq" id="NP_001185488.1">
    <molecule id="Q9NZQ0-3"/>
    <property type="nucleotide sequence ID" value="NM_001198559.1"/>
</dbReference>
<dbReference type="RefSeq" id="NP_057628.1">
    <molecule id="Q9NZQ0-1"/>
    <property type="nucleotide sequence ID" value="NM_016544.3"/>
</dbReference>
<dbReference type="PDB" id="2YS8">
    <property type="method" value="NMR"/>
    <property type="chains" value="A=197-273"/>
</dbReference>
<dbReference type="PDBsum" id="2YS8"/>
<dbReference type="SMR" id="Q9NZQ0"/>
<dbReference type="BioGRID" id="119429">
    <property type="interactions" value="14"/>
</dbReference>
<dbReference type="FunCoup" id="Q9NZQ0">
    <property type="interactions" value="932"/>
</dbReference>
<dbReference type="IntAct" id="Q9NZQ0">
    <property type="interactions" value="6"/>
</dbReference>
<dbReference type="STRING" id="9606.ENSP00000264711"/>
<dbReference type="iPTMnet" id="Q9NZQ0"/>
<dbReference type="PhosphoSitePlus" id="Q9NZQ0"/>
<dbReference type="BioMuta" id="DNAJC27"/>
<dbReference type="DMDM" id="74734733"/>
<dbReference type="MassIVE" id="Q9NZQ0"/>
<dbReference type="PaxDb" id="9606-ENSP00000264711"/>
<dbReference type="PeptideAtlas" id="Q9NZQ0"/>
<dbReference type="ProteomicsDB" id="83475">
    <molecule id="Q9NZQ0-1"/>
</dbReference>
<dbReference type="ProteomicsDB" id="83476">
    <molecule id="Q9NZQ0-2"/>
</dbReference>
<dbReference type="ProteomicsDB" id="83477">
    <molecule id="Q9NZQ0-3"/>
</dbReference>
<dbReference type="Antibodypedia" id="27605">
    <property type="antibodies" value="158 antibodies from 21 providers"/>
</dbReference>
<dbReference type="DNASU" id="51277"/>
<dbReference type="Ensembl" id="ENST00000264711.7">
    <molecule id="Q9NZQ0-1"/>
    <property type="protein sequence ID" value="ENSP00000264711.2"/>
    <property type="gene ID" value="ENSG00000115137.12"/>
</dbReference>
<dbReference type="Ensembl" id="ENST00000380809.7">
    <molecule id="Q9NZQ0-2"/>
    <property type="protein sequence ID" value="ENSP00000370187.3"/>
    <property type="gene ID" value="ENSG00000115137.12"/>
</dbReference>
<dbReference type="Ensembl" id="ENST00000534855.5">
    <molecule id="Q9NZQ0-3"/>
    <property type="protein sequence ID" value="ENSP00000440086.2"/>
    <property type="gene ID" value="ENSG00000115137.12"/>
</dbReference>
<dbReference type="GeneID" id="51277"/>
<dbReference type="KEGG" id="hsa:51277"/>
<dbReference type="MANE-Select" id="ENST00000264711.7">
    <property type="protein sequence ID" value="ENSP00000264711.2"/>
    <property type="RefSeq nucleotide sequence ID" value="NM_016544.3"/>
    <property type="RefSeq protein sequence ID" value="NP_057628.1"/>
</dbReference>
<dbReference type="UCSC" id="uc002rft.2">
    <molecule id="Q9NZQ0-1"/>
    <property type="organism name" value="human"/>
</dbReference>
<dbReference type="AGR" id="HGNC:30290"/>
<dbReference type="CTD" id="51277"/>
<dbReference type="DisGeNET" id="51277"/>
<dbReference type="GeneCards" id="DNAJC27"/>
<dbReference type="HGNC" id="HGNC:30290">
    <property type="gene designation" value="DNAJC27"/>
</dbReference>
<dbReference type="HPA" id="ENSG00000115137">
    <property type="expression patterns" value="Tissue enhanced (testis)"/>
</dbReference>
<dbReference type="MIM" id="613527">
    <property type="type" value="gene"/>
</dbReference>
<dbReference type="neXtProt" id="NX_Q9NZQ0"/>
<dbReference type="OpenTargets" id="ENSG00000115137"/>
<dbReference type="PharmGKB" id="PA164718860"/>
<dbReference type="VEuPathDB" id="HostDB:ENSG00000115137"/>
<dbReference type="eggNOG" id="KOG0098">
    <property type="taxonomic scope" value="Eukaryota"/>
</dbReference>
<dbReference type="GeneTree" id="ENSGT00940000157133"/>
<dbReference type="HOGENOM" id="CLU_041217_16_0_1"/>
<dbReference type="InParanoid" id="Q9NZQ0"/>
<dbReference type="OMA" id="NMENVVF"/>
<dbReference type="OrthoDB" id="8830751at2759"/>
<dbReference type="PAN-GO" id="Q9NZQ0">
    <property type="GO annotations" value="2 GO annotations based on evolutionary models"/>
</dbReference>
<dbReference type="PhylomeDB" id="Q9NZQ0"/>
<dbReference type="TreeFam" id="TF328564"/>
<dbReference type="PathwayCommons" id="Q9NZQ0"/>
<dbReference type="SignaLink" id="Q9NZQ0"/>
<dbReference type="BioGRID-ORCS" id="51277">
    <property type="hits" value="12 hits in 1151 CRISPR screens"/>
</dbReference>
<dbReference type="EvolutionaryTrace" id="Q9NZQ0"/>
<dbReference type="GenomeRNAi" id="51277"/>
<dbReference type="Pharos" id="Q9NZQ0">
    <property type="development level" value="Tbio"/>
</dbReference>
<dbReference type="PRO" id="PR:Q9NZQ0"/>
<dbReference type="Proteomes" id="UP000005640">
    <property type="component" value="Chromosome 2"/>
</dbReference>
<dbReference type="RNAct" id="Q9NZQ0">
    <property type="molecule type" value="protein"/>
</dbReference>
<dbReference type="Bgee" id="ENSG00000115137">
    <property type="expression patterns" value="Expressed in endothelial cell and 188 other cell types or tissues"/>
</dbReference>
<dbReference type="GO" id="GO:0031410">
    <property type="term" value="C:cytoplasmic vesicle"/>
    <property type="evidence" value="ECO:0007669"/>
    <property type="project" value="UniProtKB-ARBA"/>
</dbReference>
<dbReference type="GO" id="GO:0005634">
    <property type="term" value="C:nucleus"/>
    <property type="evidence" value="ECO:0007669"/>
    <property type="project" value="UniProtKB-SubCell"/>
</dbReference>
<dbReference type="GO" id="GO:0005525">
    <property type="term" value="F:GTP binding"/>
    <property type="evidence" value="ECO:0007669"/>
    <property type="project" value="UniProtKB-KW"/>
</dbReference>
<dbReference type="GO" id="GO:0003924">
    <property type="term" value="F:GTPase activity"/>
    <property type="evidence" value="ECO:0000318"/>
    <property type="project" value="GO_Central"/>
</dbReference>
<dbReference type="GO" id="GO:0006886">
    <property type="term" value="P:intracellular protein transport"/>
    <property type="evidence" value="ECO:0000318"/>
    <property type="project" value="GO_Central"/>
</dbReference>
<dbReference type="GO" id="GO:0070374">
    <property type="term" value="P:positive regulation of ERK1 and ERK2 cascade"/>
    <property type="evidence" value="ECO:0007669"/>
    <property type="project" value="Ensembl"/>
</dbReference>
<dbReference type="CDD" id="cd06257">
    <property type="entry name" value="DnaJ"/>
    <property type="match status" value="1"/>
</dbReference>
<dbReference type="CDD" id="cd04119">
    <property type="entry name" value="RJL"/>
    <property type="match status" value="1"/>
</dbReference>
<dbReference type="FunFam" id="3.40.50.300:FF:000697">
    <property type="entry name" value="DnaJ homolog subfamily C member 27"/>
    <property type="match status" value="1"/>
</dbReference>
<dbReference type="FunFam" id="1.10.287.110:FF:000019">
    <property type="entry name" value="dnaJ homolog subfamily C member 27"/>
    <property type="match status" value="1"/>
</dbReference>
<dbReference type="Gene3D" id="1.10.287.110">
    <property type="entry name" value="DnaJ domain"/>
    <property type="match status" value="1"/>
</dbReference>
<dbReference type="Gene3D" id="3.40.50.300">
    <property type="entry name" value="P-loop containing nucleotide triphosphate hydrolases"/>
    <property type="match status" value="1"/>
</dbReference>
<dbReference type="InterPro" id="IPR001623">
    <property type="entry name" value="DnaJ_domain"/>
</dbReference>
<dbReference type="InterPro" id="IPR036869">
    <property type="entry name" value="J_dom_sf"/>
</dbReference>
<dbReference type="InterPro" id="IPR027417">
    <property type="entry name" value="P-loop_NTPase"/>
</dbReference>
<dbReference type="InterPro" id="IPR005225">
    <property type="entry name" value="Small_GTP-bd"/>
</dbReference>
<dbReference type="InterPro" id="IPR001806">
    <property type="entry name" value="Small_GTPase"/>
</dbReference>
<dbReference type="NCBIfam" id="TIGR00231">
    <property type="entry name" value="small_GTP"/>
    <property type="match status" value="1"/>
</dbReference>
<dbReference type="PANTHER" id="PTHR47981">
    <property type="entry name" value="RAB FAMILY"/>
    <property type="match status" value="1"/>
</dbReference>
<dbReference type="PANTHER" id="PTHR47981:SF20">
    <property type="entry name" value="RAS-RELATED PROTEIN RAB-7A"/>
    <property type="match status" value="1"/>
</dbReference>
<dbReference type="Pfam" id="PF00226">
    <property type="entry name" value="DnaJ"/>
    <property type="match status" value="1"/>
</dbReference>
<dbReference type="Pfam" id="PF00071">
    <property type="entry name" value="Ras"/>
    <property type="match status" value="1"/>
</dbReference>
<dbReference type="PRINTS" id="PR00625">
    <property type="entry name" value="JDOMAIN"/>
</dbReference>
<dbReference type="PRINTS" id="PR00449">
    <property type="entry name" value="RASTRNSFRMNG"/>
</dbReference>
<dbReference type="SMART" id="SM00271">
    <property type="entry name" value="DnaJ"/>
    <property type="match status" value="1"/>
</dbReference>
<dbReference type="SMART" id="SM00175">
    <property type="entry name" value="RAB"/>
    <property type="match status" value="1"/>
</dbReference>
<dbReference type="SMART" id="SM00176">
    <property type="entry name" value="RAN"/>
    <property type="match status" value="1"/>
</dbReference>
<dbReference type="SMART" id="SM00173">
    <property type="entry name" value="RAS"/>
    <property type="match status" value="1"/>
</dbReference>
<dbReference type="SMART" id="SM00174">
    <property type="entry name" value="RHO"/>
    <property type="match status" value="1"/>
</dbReference>
<dbReference type="SUPFAM" id="SSF46565">
    <property type="entry name" value="Chaperone J-domain"/>
    <property type="match status" value="1"/>
</dbReference>
<dbReference type="SUPFAM" id="SSF52540">
    <property type="entry name" value="P-loop containing nucleoside triphosphate hydrolases"/>
    <property type="match status" value="1"/>
</dbReference>
<dbReference type="PROSITE" id="PS50076">
    <property type="entry name" value="DNAJ_2"/>
    <property type="match status" value="1"/>
</dbReference>
<dbReference type="PROSITE" id="PS51419">
    <property type="entry name" value="RAB"/>
    <property type="match status" value="1"/>
</dbReference>
<proteinExistence type="evidence at protein level"/>
<protein>
    <recommendedName>
        <fullName>DnaJ homolog subfamily C member 27</fullName>
    </recommendedName>
    <alternativeName>
        <fullName>Rab and DnaJ domain-containing protein</fullName>
    </alternativeName>
</protein>
<feature type="chain" id="PRO_0000332975" description="DnaJ homolog subfamily C member 27">
    <location>
        <begin position="1"/>
        <end position="273"/>
    </location>
</feature>
<feature type="domain" description="J" evidence="3">
    <location>
        <begin position="217"/>
        <end position="273"/>
    </location>
</feature>
<feature type="region of interest" description="Required for interaction with MAPK1" evidence="2">
    <location>
        <begin position="1"/>
        <end position="18"/>
    </location>
</feature>
<feature type="binding site" evidence="1">
    <location>
        <begin position="23"/>
        <end position="30"/>
    </location>
    <ligand>
        <name>GTP</name>
        <dbReference type="ChEBI" id="CHEBI:37565"/>
    </ligand>
</feature>
<feature type="binding site" evidence="1">
    <location>
        <begin position="71"/>
        <end position="75"/>
    </location>
    <ligand>
        <name>GTP</name>
        <dbReference type="ChEBI" id="CHEBI:37565"/>
    </ligand>
</feature>
<feature type="binding site" evidence="1">
    <location>
        <begin position="134"/>
        <end position="137"/>
    </location>
    <ligand>
        <name>GTP</name>
        <dbReference type="ChEBI" id="CHEBI:37565"/>
    </ligand>
</feature>
<feature type="splice variant" id="VSP_033409" description="In isoform 2." evidence="5">
    <original>VRNEFYKDTQ</original>
    <variation>MRKLRRREVK</variation>
    <location>
        <begin position="81"/>
        <end position="90"/>
    </location>
</feature>
<feature type="splice variant" id="VSP_033410" description="In isoform 2." evidence="5">
    <location>
        <begin position="91"/>
        <end position="273"/>
    </location>
</feature>
<feature type="splice variant" id="VSP_033411" description="In isoform 3." evidence="6">
    <original>T</original>
    <variation>G</variation>
    <location>
        <position position="177"/>
    </location>
</feature>
<feature type="splice variant" id="VSP_033412" description="In isoform 3." evidence="6">
    <location>
        <begin position="178"/>
        <end position="273"/>
    </location>
</feature>
<feature type="helix" evidence="8">
    <location>
        <begin position="203"/>
        <end position="213"/>
    </location>
</feature>
<feature type="helix" evidence="8">
    <location>
        <begin position="218"/>
        <end position="222"/>
    </location>
</feature>
<feature type="helix" evidence="8">
    <location>
        <begin position="230"/>
        <end position="244"/>
    </location>
</feature>
<feature type="turn" evidence="8">
    <location>
        <begin position="246"/>
        <end position="248"/>
    </location>
</feature>
<feature type="helix" evidence="8">
    <location>
        <begin position="254"/>
        <end position="272"/>
    </location>
</feature>
<evidence type="ECO:0000250" key="1"/>
<evidence type="ECO:0000250" key="2">
    <source>
        <dbReference type="UniProtKB" id="Q8CFP6"/>
    </source>
</evidence>
<evidence type="ECO:0000255" key="3">
    <source>
        <dbReference type="PROSITE-ProRule" id="PRU00286"/>
    </source>
</evidence>
<evidence type="ECO:0000269" key="4">
    <source>
    </source>
</evidence>
<evidence type="ECO:0000303" key="5">
    <source>
    </source>
</evidence>
<evidence type="ECO:0000303" key="6">
    <source ref="1"/>
</evidence>
<evidence type="ECO:0000305" key="7"/>
<evidence type="ECO:0007829" key="8">
    <source>
        <dbReference type="PDB" id="2YS8"/>
    </source>
</evidence>
<organism>
    <name type="scientific">Homo sapiens</name>
    <name type="common">Human</name>
    <dbReference type="NCBI Taxonomy" id="9606"/>
    <lineage>
        <taxon>Eukaryota</taxon>
        <taxon>Metazoa</taxon>
        <taxon>Chordata</taxon>
        <taxon>Craniata</taxon>
        <taxon>Vertebrata</taxon>
        <taxon>Euteleostomi</taxon>
        <taxon>Mammalia</taxon>
        <taxon>Eutheria</taxon>
        <taxon>Euarchontoglires</taxon>
        <taxon>Primates</taxon>
        <taxon>Haplorrhini</taxon>
        <taxon>Catarrhini</taxon>
        <taxon>Hominidae</taxon>
        <taxon>Homo</taxon>
    </lineage>
</organism>
<reference key="1">
    <citation type="submission" date="2002-04" db="EMBL/GenBank/DDBJ databases">
        <title>Identification of a unique Rab GTPase containing a J domain that interacts with Hsc70.</title>
        <authorList>
            <person name="Chen T."/>
            <person name="Zhang W."/>
            <person name="Li N."/>
            <person name="Wan T."/>
            <person name="Zhang M."/>
            <person name="Chen G."/>
            <person name="Zhang Y."/>
            <person name="Cao X."/>
        </authorList>
    </citation>
    <scope>NUCLEOTIDE SEQUENCE [MRNA] (ISOFORMS 1 AND 3)</scope>
</reference>
<reference key="2">
    <citation type="journal article" date="2007" name="BMC Genomics">
        <title>The full-ORF clone resource of the German cDNA consortium.</title>
        <authorList>
            <person name="Bechtel S."/>
            <person name="Rosenfelder H."/>
            <person name="Duda A."/>
            <person name="Schmidt C.P."/>
            <person name="Ernst U."/>
            <person name="Wellenreuther R."/>
            <person name="Mehrle A."/>
            <person name="Schuster C."/>
            <person name="Bahr A."/>
            <person name="Bloecker H."/>
            <person name="Heubner D."/>
            <person name="Hoerlein A."/>
            <person name="Michel G."/>
            <person name="Wedler H."/>
            <person name="Koehrer K."/>
            <person name="Ottenwaelder B."/>
            <person name="Poustka A."/>
            <person name="Wiemann S."/>
            <person name="Schupp I."/>
        </authorList>
    </citation>
    <scope>NUCLEOTIDE SEQUENCE [LARGE SCALE MRNA] (ISOFORM 2)</scope>
    <source>
        <tissue>Testis</tissue>
    </source>
</reference>
<reference key="3">
    <citation type="submission" date="2005-09" db="EMBL/GenBank/DDBJ databases">
        <authorList>
            <person name="Mural R.J."/>
            <person name="Istrail S."/>
            <person name="Sutton G.G."/>
            <person name="Florea L."/>
            <person name="Halpern A.L."/>
            <person name="Mobarry C.M."/>
            <person name="Lippert R."/>
            <person name="Walenz B."/>
            <person name="Shatkay H."/>
            <person name="Dew I."/>
            <person name="Miller J.R."/>
            <person name="Flanigan M.J."/>
            <person name="Edwards N.J."/>
            <person name="Bolanos R."/>
            <person name="Fasulo D."/>
            <person name="Halldorsson B.V."/>
            <person name="Hannenhalli S."/>
            <person name="Turner R."/>
            <person name="Yooseph S."/>
            <person name="Lu F."/>
            <person name="Nusskern D.R."/>
            <person name="Shue B.C."/>
            <person name="Zheng X.H."/>
            <person name="Zhong F."/>
            <person name="Delcher A.L."/>
            <person name="Huson D.H."/>
            <person name="Kravitz S.A."/>
            <person name="Mouchard L."/>
            <person name="Reinert K."/>
            <person name="Remington K.A."/>
            <person name="Clark A.G."/>
            <person name="Waterman M.S."/>
            <person name="Eichler E.E."/>
            <person name="Adams M.D."/>
            <person name="Hunkapiller M.W."/>
            <person name="Myers E.W."/>
            <person name="Venter J.C."/>
        </authorList>
    </citation>
    <scope>NUCLEOTIDE SEQUENCE [LARGE SCALE GENOMIC DNA]</scope>
</reference>
<reference key="4">
    <citation type="journal article" date="2004" name="Genome Res.">
        <title>The status, quality, and expansion of the NIH full-length cDNA project: the Mammalian Gene Collection (MGC).</title>
        <authorList>
            <consortium name="The MGC Project Team"/>
        </authorList>
    </citation>
    <scope>NUCLEOTIDE SEQUENCE [LARGE SCALE MRNA] (ISOFORM 1)</scope>
    <source>
        <tissue>Brain</tissue>
    </source>
</reference>
<reference key="5">
    <citation type="journal article" date="2004" name="Gene">
        <title>RJLs: a new family of Ras-related GTP-binding proteins.</title>
        <authorList>
            <person name="Nepomuceno-Silva J.L."/>
            <person name="de Melo L.D."/>
            <person name="Mendonca S.M."/>
            <person name="Paixao J.C."/>
            <person name="Lopes U.G."/>
        </authorList>
    </citation>
    <scope>IDENTIFICATION</scope>
    <scope>POSSIBLE LACK OF GTPASE ACTIVITY</scope>
</reference>
<reference key="6">
    <citation type="journal article" date="2014" name="Cancer Cell">
        <title>Small GTPase RBJ mediates nuclear entrapment of MEK1/MEK2 in tumor progression.</title>
        <authorList>
            <person name="Chen T."/>
            <person name="Yang M."/>
            <person name="Yu Z."/>
            <person name="Tang S."/>
            <person name="Wang C."/>
            <person name="Zhu X."/>
            <person name="Guo J."/>
            <person name="Li N."/>
            <person name="Zhang W."/>
            <person name="Hou J."/>
            <person name="Liu H."/>
            <person name="Han C."/>
            <person name="Liu Q."/>
            <person name="Gu Y."/>
            <person name="Qian C."/>
            <person name="Wan T."/>
            <person name="Cui L."/>
            <person name="Zhu M."/>
            <person name="Zheng W."/>
            <person name="Cao X."/>
        </authorList>
    </citation>
    <scope>TISSUE SPECIFICITY</scope>
</reference>
<reference key="7">
    <citation type="submission" date="2007-10" db="PDB data bank">
        <title>Solution structure of the dnaJ-like domain from human Ras-associated protein RAP1.</title>
        <authorList>
            <consortium name="RIKEN structural genomics initiative (RSGI)"/>
        </authorList>
    </citation>
    <scope>STRUCTURE BY NMR OF 197-273</scope>
</reference>
<sequence length="273" mass="30855">MEANMPKRKEPGRSLRIKVISMGNAEVGKSCIIKRYCEKRFVSKYLATIGIDYGVTKVHVRDREIKVNIFDMAGHPFFYEVRNEFYKDTQGVILVYDVGQKDSFDALDAWLAEMKQELGPHGNMENIIFVVCANKIDCTKHRCVDESEGRLWAESKGFLYFETSAQTGEGINEMFQTFYISIVDLCENGGKRPTTNSSASFTKEQADAIRRIRNSKDSWDMLGVKPGASRDEVNKAYRKLAVLLHPDKCVAPGSEDAFKAVVNARTALLKNIK</sequence>
<name>DJC27_HUMAN</name>
<comment type="function">
    <text evidence="2">GTPase which can activate the MEK/ERK pathway and induce cell transformation when overexpressed. May act as a nuclear scaffold for MAPK1, probably by association with MAPK1 nuclear export signal leading to enhanced ERK1/ERK2 signaling.</text>
</comment>
<comment type="subunit">
    <text evidence="2">Interacts directly with MAPK1 (wild-type and kinase-deficient forms). Interacts directly (in GTP-bound form) with MAP2K1 (wild-type and kinase-deficient forms).</text>
</comment>
<comment type="interaction">
    <interactant intactId="EBI-10317544">
        <id>Q9NZQ0</id>
    </interactant>
    <interactant intactId="EBI-717422">
        <id>Q12800</id>
        <label>TFCP2</label>
    </interactant>
    <organismsDiffer>false</organismsDiffer>
    <experiments>6</experiments>
</comment>
<comment type="subcellular location">
    <subcellularLocation>
        <location evidence="2">Nucleus</location>
    </subcellularLocation>
</comment>
<comment type="alternative products">
    <event type="alternative splicing"/>
    <isoform>
        <id>Q9NZQ0-1</id>
        <name>1</name>
        <sequence type="displayed"/>
    </isoform>
    <isoform>
        <id>Q9NZQ0-2</id>
        <name>2</name>
        <sequence type="described" ref="VSP_033409 VSP_033410"/>
    </isoform>
    <isoform>
        <id>Q9NZQ0-3</id>
        <name>3</name>
        <sequence type="described" ref="VSP_033411 VSP_033412"/>
    </isoform>
</comment>
<comment type="tissue specificity">
    <text evidence="4">Overexpressed in gastrointestinal cancers; expression correlates with later tumor-node-metastasis stages of colorectal cancers.</text>
</comment>
<comment type="miscellaneous">
    <text evidence="4">DNAJC27/RBJ knockdown in several colorectal cancer cell lines is correlated to inhibition of MEK/ERK activation, cell proliferation, colony formation and in vivo tumor growth.</text>
</comment>
<comment type="similarity">
    <text evidence="7">Belongs to the small GTPase superfamily. Rab family.</text>
</comment>
<gene>
    <name type="primary">DNAJC27</name>
    <name type="synonym">RABJS</name>
    <name type="synonym">RBJ</name>
</gene>
<accession>Q9NZQ0</accession>
<accession>Q5JV88</accession>
<accession>Q86Y24</accession>
<keyword id="KW-0002">3D-structure</keyword>
<keyword id="KW-0025">Alternative splicing</keyword>
<keyword id="KW-0342">GTP-binding</keyword>
<keyword id="KW-0547">Nucleotide-binding</keyword>
<keyword id="KW-0539">Nucleus</keyword>
<keyword id="KW-0553">Oncogene</keyword>
<keyword id="KW-1267">Proteomics identification</keyword>
<keyword id="KW-1185">Reference proteome</keyword>